<feature type="chain" id="PRO_0000353017" description="Threonylcarbamoyl-AMP synthase">
    <location>
        <begin position="1"/>
        <end position="187"/>
    </location>
</feature>
<feature type="domain" description="YrdC-like" evidence="1">
    <location>
        <begin position="4"/>
        <end position="187"/>
    </location>
</feature>
<reference key="1">
    <citation type="journal article" date="2000" name="Nature">
        <title>The genome sequence of the plant pathogen Xylella fastidiosa.</title>
        <authorList>
            <person name="Simpson A.J.G."/>
            <person name="Reinach F.C."/>
            <person name="Arruda P."/>
            <person name="Abreu F.A."/>
            <person name="Acencio M."/>
            <person name="Alvarenga R."/>
            <person name="Alves L.M.C."/>
            <person name="Araya J.E."/>
            <person name="Baia G.S."/>
            <person name="Baptista C.S."/>
            <person name="Barros M.H."/>
            <person name="Bonaccorsi E.D."/>
            <person name="Bordin S."/>
            <person name="Bove J.M."/>
            <person name="Briones M.R.S."/>
            <person name="Bueno M.R.P."/>
            <person name="Camargo A.A."/>
            <person name="Camargo L.E.A."/>
            <person name="Carraro D.M."/>
            <person name="Carrer H."/>
            <person name="Colauto N.B."/>
            <person name="Colombo C."/>
            <person name="Costa F.F."/>
            <person name="Costa M.C.R."/>
            <person name="Costa-Neto C.M."/>
            <person name="Coutinho L.L."/>
            <person name="Cristofani M."/>
            <person name="Dias-Neto E."/>
            <person name="Docena C."/>
            <person name="El-Dorry H."/>
            <person name="Facincani A.P."/>
            <person name="Ferreira A.J.S."/>
            <person name="Ferreira V.C.A."/>
            <person name="Ferro J.A."/>
            <person name="Fraga J.S."/>
            <person name="Franca S.C."/>
            <person name="Franco M.C."/>
            <person name="Frohme M."/>
            <person name="Furlan L.R."/>
            <person name="Garnier M."/>
            <person name="Goldman G.H."/>
            <person name="Goldman M.H.S."/>
            <person name="Gomes S.L."/>
            <person name="Gruber A."/>
            <person name="Ho P.L."/>
            <person name="Hoheisel J.D."/>
            <person name="Junqueira M.L."/>
            <person name="Kemper E.L."/>
            <person name="Kitajima J.P."/>
            <person name="Krieger J.E."/>
            <person name="Kuramae E.E."/>
            <person name="Laigret F."/>
            <person name="Lambais M.R."/>
            <person name="Leite L.C.C."/>
            <person name="Lemos E.G.M."/>
            <person name="Lemos M.V.F."/>
            <person name="Lopes S.A."/>
            <person name="Lopes C.R."/>
            <person name="Machado J.A."/>
            <person name="Machado M.A."/>
            <person name="Madeira A.M.B.N."/>
            <person name="Madeira H.M.F."/>
            <person name="Marino C.L."/>
            <person name="Marques M.V."/>
            <person name="Martins E.A.L."/>
            <person name="Martins E.M.F."/>
            <person name="Matsukuma A.Y."/>
            <person name="Menck C.F.M."/>
            <person name="Miracca E.C."/>
            <person name="Miyaki C.Y."/>
            <person name="Monteiro-Vitorello C.B."/>
            <person name="Moon D.H."/>
            <person name="Nagai M.A."/>
            <person name="Nascimento A.L.T.O."/>
            <person name="Netto L.E.S."/>
            <person name="Nhani A. Jr."/>
            <person name="Nobrega F.G."/>
            <person name="Nunes L.R."/>
            <person name="Oliveira M.A."/>
            <person name="de Oliveira M.C."/>
            <person name="de Oliveira R.C."/>
            <person name="Palmieri D.A."/>
            <person name="Paris A."/>
            <person name="Peixoto B.R."/>
            <person name="Pereira G.A.G."/>
            <person name="Pereira H.A. Jr."/>
            <person name="Pesquero J.B."/>
            <person name="Quaggio R.B."/>
            <person name="Roberto P.G."/>
            <person name="Rodrigues V."/>
            <person name="de Rosa A.J.M."/>
            <person name="de Rosa V.E. Jr."/>
            <person name="de Sa R.G."/>
            <person name="Santelli R.V."/>
            <person name="Sawasaki H.E."/>
            <person name="da Silva A.C.R."/>
            <person name="da Silva A.M."/>
            <person name="da Silva F.R."/>
            <person name="Silva W.A. Jr."/>
            <person name="da Silveira J.F."/>
            <person name="Silvestri M.L.Z."/>
            <person name="Siqueira W.J."/>
            <person name="de Souza A.A."/>
            <person name="de Souza A.P."/>
            <person name="Terenzi M.F."/>
            <person name="Truffi D."/>
            <person name="Tsai S.M."/>
            <person name="Tsuhako M.H."/>
            <person name="Vallada H."/>
            <person name="Van Sluys M.A."/>
            <person name="Verjovski-Almeida S."/>
            <person name="Vettore A.L."/>
            <person name="Zago M.A."/>
            <person name="Zatz M."/>
            <person name="Meidanis J."/>
            <person name="Setubal J.C."/>
        </authorList>
    </citation>
    <scope>NUCLEOTIDE SEQUENCE [LARGE SCALE GENOMIC DNA]</scope>
    <source>
        <strain>9a5c</strain>
    </source>
</reference>
<accession>Q9PEV9</accession>
<protein>
    <recommendedName>
        <fullName evidence="1">Threonylcarbamoyl-AMP synthase</fullName>
        <shortName evidence="1">TC-AMP synthase</shortName>
        <ecNumber evidence="1">2.7.7.87</ecNumber>
    </recommendedName>
    <alternativeName>
        <fullName evidence="1">L-threonylcarbamoyladenylate synthase</fullName>
    </alternativeName>
    <alternativeName>
        <fullName evidence="1">t(6)A37 threonylcarbamoyladenosine biosynthesis protein TsaC</fullName>
    </alternativeName>
    <alternativeName>
        <fullName evidence="1">tRNA threonylcarbamoyladenosine biosynthesis protein TsaC</fullName>
    </alternativeName>
</protein>
<proteinExistence type="inferred from homology"/>
<evidence type="ECO:0000255" key="1">
    <source>
        <dbReference type="HAMAP-Rule" id="MF_01852"/>
    </source>
</evidence>
<keyword id="KW-0067">ATP-binding</keyword>
<keyword id="KW-0963">Cytoplasm</keyword>
<keyword id="KW-0547">Nucleotide-binding</keyword>
<keyword id="KW-0548">Nucleotidyltransferase</keyword>
<keyword id="KW-0808">Transferase</keyword>
<keyword id="KW-0819">tRNA processing</keyword>
<gene>
    <name evidence="1" type="primary">tsaC</name>
    <name type="synonym">rimN</name>
    <name type="ordered locus">XF_0919</name>
</gene>
<organism>
    <name type="scientific">Xylella fastidiosa (strain 9a5c)</name>
    <dbReference type="NCBI Taxonomy" id="160492"/>
    <lineage>
        <taxon>Bacteria</taxon>
        <taxon>Pseudomonadati</taxon>
        <taxon>Pseudomonadota</taxon>
        <taxon>Gammaproteobacteria</taxon>
        <taxon>Lysobacterales</taxon>
        <taxon>Lysobacteraceae</taxon>
        <taxon>Xylella</taxon>
    </lineage>
</organism>
<comment type="function">
    <text evidence="1">Required for the formation of a threonylcarbamoyl group on adenosine at position 37 (t(6)A37) in tRNAs that read codons beginning with adenine. Catalyzes the conversion of L-threonine, HCO(3)(-)/CO(2) and ATP to give threonylcarbamoyl-AMP (TC-AMP) as the acyladenylate intermediate, with the release of diphosphate.</text>
</comment>
<comment type="catalytic activity">
    <reaction evidence="1">
        <text>L-threonine + hydrogencarbonate + ATP = L-threonylcarbamoyladenylate + diphosphate + H2O</text>
        <dbReference type="Rhea" id="RHEA:36407"/>
        <dbReference type="ChEBI" id="CHEBI:15377"/>
        <dbReference type="ChEBI" id="CHEBI:17544"/>
        <dbReference type="ChEBI" id="CHEBI:30616"/>
        <dbReference type="ChEBI" id="CHEBI:33019"/>
        <dbReference type="ChEBI" id="CHEBI:57926"/>
        <dbReference type="ChEBI" id="CHEBI:73682"/>
        <dbReference type="EC" id="2.7.7.87"/>
    </reaction>
</comment>
<comment type="subcellular location">
    <subcellularLocation>
        <location evidence="1">Cytoplasm</location>
    </subcellularLocation>
</comment>
<comment type="similarity">
    <text evidence="1">Belongs to the SUA5 family. TsaC subfamily.</text>
</comment>
<dbReference type="EC" id="2.7.7.87" evidence="1"/>
<dbReference type="EMBL" id="AE003849">
    <property type="protein sequence ID" value="AAF83729.1"/>
    <property type="molecule type" value="Genomic_DNA"/>
</dbReference>
<dbReference type="PIR" id="A82746">
    <property type="entry name" value="A82746"/>
</dbReference>
<dbReference type="RefSeq" id="WP_010893439.1">
    <property type="nucleotide sequence ID" value="NC_002488.3"/>
</dbReference>
<dbReference type="SMR" id="Q9PEV9"/>
<dbReference type="STRING" id="160492.XF_0919"/>
<dbReference type="KEGG" id="xfa:XF_0919"/>
<dbReference type="eggNOG" id="COG0009">
    <property type="taxonomic scope" value="Bacteria"/>
</dbReference>
<dbReference type="HOGENOM" id="CLU_031397_6_0_6"/>
<dbReference type="Proteomes" id="UP000000812">
    <property type="component" value="Chromosome"/>
</dbReference>
<dbReference type="GO" id="GO:0005737">
    <property type="term" value="C:cytoplasm"/>
    <property type="evidence" value="ECO:0007669"/>
    <property type="project" value="UniProtKB-SubCell"/>
</dbReference>
<dbReference type="GO" id="GO:0005524">
    <property type="term" value="F:ATP binding"/>
    <property type="evidence" value="ECO:0007669"/>
    <property type="project" value="UniProtKB-UniRule"/>
</dbReference>
<dbReference type="GO" id="GO:0003725">
    <property type="term" value="F:double-stranded RNA binding"/>
    <property type="evidence" value="ECO:0007669"/>
    <property type="project" value="InterPro"/>
</dbReference>
<dbReference type="GO" id="GO:0061710">
    <property type="term" value="F:L-threonylcarbamoyladenylate synthase"/>
    <property type="evidence" value="ECO:0007669"/>
    <property type="project" value="UniProtKB-EC"/>
</dbReference>
<dbReference type="GO" id="GO:0000049">
    <property type="term" value="F:tRNA binding"/>
    <property type="evidence" value="ECO:0007669"/>
    <property type="project" value="TreeGrafter"/>
</dbReference>
<dbReference type="GO" id="GO:0006450">
    <property type="term" value="P:regulation of translational fidelity"/>
    <property type="evidence" value="ECO:0007669"/>
    <property type="project" value="TreeGrafter"/>
</dbReference>
<dbReference type="GO" id="GO:0002949">
    <property type="term" value="P:tRNA threonylcarbamoyladenosine modification"/>
    <property type="evidence" value="ECO:0007669"/>
    <property type="project" value="UniProtKB-UniRule"/>
</dbReference>
<dbReference type="FunFam" id="3.90.870.10:FF:000004">
    <property type="entry name" value="Threonylcarbamoyl-AMP synthase"/>
    <property type="match status" value="1"/>
</dbReference>
<dbReference type="Gene3D" id="3.90.870.10">
    <property type="entry name" value="DHBP synthase"/>
    <property type="match status" value="1"/>
</dbReference>
<dbReference type="HAMAP" id="MF_01852">
    <property type="entry name" value="TsaC"/>
    <property type="match status" value="1"/>
</dbReference>
<dbReference type="InterPro" id="IPR017945">
    <property type="entry name" value="DHBP_synth_RibB-like_a/b_dom"/>
</dbReference>
<dbReference type="InterPro" id="IPR006070">
    <property type="entry name" value="Sua5-like_dom"/>
</dbReference>
<dbReference type="InterPro" id="IPR023535">
    <property type="entry name" value="TC-AMP_synthase"/>
</dbReference>
<dbReference type="InterPro" id="IPR050156">
    <property type="entry name" value="TC-AMP_synthase_SUA5"/>
</dbReference>
<dbReference type="PANTHER" id="PTHR17490">
    <property type="entry name" value="SUA5"/>
    <property type="match status" value="1"/>
</dbReference>
<dbReference type="PANTHER" id="PTHR17490:SF18">
    <property type="entry name" value="THREONYLCARBAMOYL-AMP SYNTHASE"/>
    <property type="match status" value="1"/>
</dbReference>
<dbReference type="Pfam" id="PF01300">
    <property type="entry name" value="Sua5_yciO_yrdC"/>
    <property type="match status" value="1"/>
</dbReference>
<dbReference type="SUPFAM" id="SSF55821">
    <property type="entry name" value="YrdC/RibB"/>
    <property type="match status" value="1"/>
</dbReference>
<dbReference type="PROSITE" id="PS51163">
    <property type="entry name" value="YRDC"/>
    <property type="match status" value="1"/>
</dbReference>
<name>TSAC_XYLFA</name>
<sequence length="187" mass="20075">MATTLTLSEAVTALQQGGVIAYPTEAVWGLGCDPRQETAVHTLLNIKQRASGKGLILVTAELNTLQDWLDLDTLSPERLHEVQTSWPGPHTWVLPASTRAPHWITGHHNGLAVRISAHPLVSALCRAWNMALISTSANVAGQPPARRREDLDPSLLPHLAGIVDGPTGGLAQPTSIRDARSGHILRL</sequence>